<keyword id="KW-0025">Alternative splicing</keyword>
<keyword id="KW-1185">Reference proteome</keyword>
<gene>
    <name type="primary">C15orf32</name>
</gene>
<feature type="chain" id="PRO_0000244097" description="Uncharacterized protein C15orf32">
    <location>
        <begin position="1"/>
        <end position="178"/>
    </location>
</feature>
<feature type="region of interest" description="Disordered" evidence="1">
    <location>
        <begin position="1"/>
        <end position="43"/>
    </location>
</feature>
<feature type="compositionally biased region" description="Basic and acidic residues" evidence="1">
    <location>
        <begin position="1"/>
        <end position="16"/>
    </location>
</feature>
<feature type="splice variant" id="VSP_019516" description="In isoform 2." evidence="2">
    <location>
        <begin position="166"/>
        <end position="178"/>
    </location>
</feature>
<feature type="sequence variant" id="VAR_050884" description="In dbSNP:rs1455773.">
    <original>A</original>
    <variation>T</variation>
    <location>
        <position position="17"/>
    </location>
</feature>
<accession>Q32M92</accession>
<accession>C5HTZ8</accession>
<accession>Q96M45</accession>
<protein>
    <recommendedName>
        <fullName>Uncharacterized protein C15orf32</fullName>
    </recommendedName>
</protein>
<evidence type="ECO:0000256" key="1">
    <source>
        <dbReference type="SAM" id="MobiDB-lite"/>
    </source>
</evidence>
<evidence type="ECO:0000303" key="2">
    <source>
    </source>
</evidence>
<dbReference type="EMBL" id="AK057393">
    <property type="protein sequence ID" value="BAB71467.1"/>
    <property type="molecule type" value="mRNA"/>
</dbReference>
<dbReference type="EMBL" id="FJ515837">
    <property type="protein sequence ID" value="ACS13729.1"/>
    <property type="molecule type" value="Genomic_DNA"/>
</dbReference>
<dbReference type="EMBL" id="CH471101">
    <property type="protein sequence ID" value="EAX02151.1"/>
    <property type="molecule type" value="Genomic_DNA"/>
</dbReference>
<dbReference type="EMBL" id="BC109252">
    <property type="protein sequence ID" value="AAI09253.1"/>
    <property type="molecule type" value="mRNA"/>
</dbReference>
<dbReference type="EMBL" id="BC109253">
    <property type="protein sequence ID" value="AAI09254.1"/>
    <property type="molecule type" value="mRNA"/>
</dbReference>
<dbReference type="RefSeq" id="NP_001288035.1">
    <property type="nucleotide sequence ID" value="NM_001301106.1"/>
</dbReference>
<dbReference type="RefSeq" id="NP_694585.1">
    <property type="nucleotide sequence ID" value="NM_153040.2"/>
</dbReference>
<dbReference type="BioGRID" id="126949">
    <property type="interactions" value="13"/>
</dbReference>
<dbReference type="IntAct" id="Q32M92">
    <property type="interactions" value="13"/>
</dbReference>
<dbReference type="iPTMnet" id="Q32M92"/>
<dbReference type="PhosphoSitePlus" id="Q32M92"/>
<dbReference type="BioMuta" id="HGNC:26549"/>
<dbReference type="DMDM" id="109822357"/>
<dbReference type="PaxDb" id="9606-ENSP00000330267"/>
<dbReference type="PeptideAtlas" id="Q32M92"/>
<dbReference type="ProteomicsDB" id="61598">
    <molecule id="Q32M92-1"/>
</dbReference>
<dbReference type="ProteomicsDB" id="61599">
    <molecule id="Q32M92-2"/>
</dbReference>
<dbReference type="AGR" id="HGNC:26549"/>
<dbReference type="GeneCards" id="C15orf32"/>
<dbReference type="HGNC" id="HGNC:26549">
    <property type="gene designation" value="C15orf32"/>
</dbReference>
<dbReference type="neXtProt" id="NX_Q32M92"/>
<dbReference type="PharmGKB" id="PA142672268"/>
<dbReference type="eggNOG" id="ENOG502TDHB">
    <property type="taxonomic scope" value="Eukaryota"/>
</dbReference>
<dbReference type="InParanoid" id="Q32M92"/>
<dbReference type="PAN-GO" id="Q32M92">
    <property type="GO annotations" value="0 GO annotations based on evolutionary models"/>
</dbReference>
<dbReference type="PhylomeDB" id="Q32M92"/>
<dbReference type="TreeFam" id="TF342159"/>
<dbReference type="PathwayCommons" id="Q32M92"/>
<dbReference type="SignaLink" id="Q32M92"/>
<dbReference type="BioGRID-ORCS" id="145858">
    <property type="hits" value="16 hits in 1123 CRISPR screens"/>
</dbReference>
<dbReference type="ChiTaRS" id="C15orf32">
    <property type="organism name" value="human"/>
</dbReference>
<dbReference type="GenomeRNAi" id="145858"/>
<dbReference type="Pharos" id="Q32M92">
    <property type="development level" value="Tdark"/>
</dbReference>
<dbReference type="PRO" id="PR:Q32M92"/>
<dbReference type="Proteomes" id="UP000005640">
    <property type="component" value="Unplaced"/>
</dbReference>
<dbReference type="RNAct" id="Q32M92">
    <property type="molecule type" value="protein"/>
</dbReference>
<organism>
    <name type="scientific">Homo sapiens</name>
    <name type="common">Human</name>
    <dbReference type="NCBI Taxonomy" id="9606"/>
    <lineage>
        <taxon>Eukaryota</taxon>
        <taxon>Metazoa</taxon>
        <taxon>Chordata</taxon>
        <taxon>Craniata</taxon>
        <taxon>Vertebrata</taxon>
        <taxon>Euteleostomi</taxon>
        <taxon>Mammalia</taxon>
        <taxon>Eutheria</taxon>
        <taxon>Euarchontoglires</taxon>
        <taxon>Primates</taxon>
        <taxon>Haplorrhini</taxon>
        <taxon>Catarrhini</taxon>
        <taxon>Hominidae</taxon>
        <taxon>Homo</taxon>
    </lineage>
</organism>
<sequence>MNKRTSVDASKEDLHPADPQSGEGVPPNRKNTKTSPRGEGTAPPFSARPCVWTLCEMLSILALVGVLHPFYRSNNQVYQKLKTHLRCQSSRVDGLMLKPTLLTPSQLKSPEGHLILPTFNHLVIRHILDPKQIFCVADVCTDCKFNCGSIERHQKRHLMRVSQDWEHLIRYRNQICLS</sequence>
<name>CO032_HUMAN</name>
<comment type="interaction">
    <interactant intactId="EBI-25911375">
        <id>Q32M92-2</id>
    </interactant>
    <interactant intactId="EBI-748974">
        <id>Q96CV9</id>
        <label>OPTN</label>
    </interactant>
    <organismsDiffer>false</organismsDiffer>
    <experiments>3</experiments>
</comment>
<comment type="alternative products">
    <event type="alternative splicing"/>
    <isoform>
        <id>Q32M92-1</id>
        <name>1</name>
        <sequence type="displayed"/>
    </isoform>
    <isoform>
        <id>Q32M92-2</id>
        <name>2</name>
        <sequence type="described" ref="VSP_019516"/>
    </isoform>
</comment>
<proteinExistence type="evidence at protein level"/>
<reference key="1">
    <citation type="journal article" date="2004" name="Nat. Genet.">
        <title>Complete sequencing and characterization of 21,243 full-length human cDNAs.</title>
        <authorList>
            <person name="Ota T."/>
            <person name="Suzuki Y."/>
            <person name="Nishikawa T."/>
            <person name="Otsuki T."/>
            <person name="Sugiyama T."/>
            <person name="Irie R."/>
            <person name="Wakamatsu A."/>
            <person name="Hayashi K."/>
            <person name="Sato H."/>
            <person name="Nagai K."/>
            <person name="Kimura K."/>
            <person name="Makita H."/>
            <person name="Sekine M."/>
            <person name="Obayashi M."/>
            <person name="Nishi T."/>
            <person name="Shibahara T."/>
            <person name="Tanaka T."/>
            <person name="Ishii S."/>
            <person name="Yamamoto J."/>
            <person name="Saito K."/>
            <person name="Kawai Y."/>
            <person name="Isono Y."/>
            <person name="Nakamura Y."/>
            <person name="Nagahari K."/>
            <person name="Murakami K."/>
            <person name="Yasuda T."/>
            <person name="Iwayanagi T."/>
            <person name="Wagatsuma M."/>
            <person name="Shiratori A."/>
            <person name="Sudo H."/>
            <person name="Hosoiri T."/>
            <person name="Kaku Y."/>
            <person name="Kodaira H."/>
            <person name="Kondo H."/>
            <person name="Sugawara M."/>
            <person name="Takahashi M."/>
            <person name="Kanda K."/>
            <person name="Yokoi T."/>
            <person name="Furuya T."/>
            <person name="Kikkawa E."/>
            <person name="Omura Y."/>
            <person name="Abe K."/>
            <person name="Kamihara K."/>
            <person name="Katsuta N."/>
            <person name="Sato K."/>
            <person name="Tanikawa M."/>
            <person name="Yamazaki M."/>
            <person name="Ninomiya K."/>
            <person name="Ishibashi T."/>
            <person name="Yamashita H."/>
            <person name="Murakawa K."/>
            <person name="Fujimori K."/>
            <person name="Tanai H."/>
            <person name="Kimata M."/>
            <person name="Watanabe M."/>
            <person name="Hiraoka S."/>
            <person name="Chiba Y."/>
            <person name="Ishida S."/>
            <person name="Ono Y."/>
            <person name="Takiguchi S."/>
            <person name="Watanabe S."/>
            <person name="Yosida M."/>
            <person name="Hotuta T."/>
            <person name="Kusano J."/>
            <person name="Kanehori K."/>
            <person name="Takahashi-Fujii A."/>
            <person name="Hara H."/>
            <person name="Tanase T.-O."/>
            <person name="Nomura Y."/>
            <person name="Togiya S."/>
            <person name="Komai F."/>
            <person name="Hara R."/>
            <person name="Takeuchi K."/>
            <person name="Arita M."/>
            <person name="Imose N."/>
            <person name="Musashino K."/>
            <person name="Yuuki H."/>
            <person name="Oshima A."/>
            <person name="Sasaki N."/>
            <person name="Aotsuka S."/>
            <person name="Yoshikawa Y."/>
            <person name="Matsunawa H."/>
            <person name="Ichihara T."/>
            <person name="Shiohata N."/>
            <person name="Sano S."/>
            <person name="Moriya S."/>
            <person name="Momiyama H."/>
            <person name="Satoh N."/>
            <person name="Takami S."/>
            <person name="Terashima Y."/>
            <person name="Suzuki O."/>
            <person name="Nakagawa S."/>
            <person name="Senoh A."/>
            <person name="Mizoguchi H."/>
            <person name="Goto Y."/>
            <person name="Shimizu F."/>
            <person name="Wakebe H."/>
            <person name="Hishigaki H."/>
            <person name="Watanabe T."/>
            <person name="Sugiyama A."/>
            <person name="Takemoto M."/>
            <person name="Kawakami B."/>
            <person name="Yamazaki M."/>
            <person name="Watanabe K."/>
            <person name="Kumagai A."/>
            <person name="Itakura S."/>
            <person name="Fukuzumi Y."/>
            <person name="Fujimori Y."/>
            <person name="Komiyama M."/>
            <person name="Tashiro H."/>
            <person name="Tanigami A."/>
            <person name="Fujiwara T."/>
            <person name="Ono T."/>
            <person name="Yamada K."/>
            <person name="Fujii Y."/>
            <person name="Ozaki K."/>
            <person name="Hirao M."/>
            <person name="Ohmori Y."/>
            <person name="Kawabata A."/>
            <person name="Hikiji T."/>
            <person name="Kobatake N."/>
            <person name="Inagaki H."/>
            <person name="Ikema Y."/>
            <person name="Okamoto S."/>
            <person name="Okitani R."/>
            <person name="Kawakami T."/>
            <person name="Noguchi S."/>
            <person name="Itoh T."/>
            <person name="Shigeta K."/>
            <person name="Senba T."/>
            <person name="Matsumura K."/>
            <person name="Nakajima Y."/>
            <person name="Mizuno T."/>
            <person name="Morinaga M."/>
            <person name="Sasaki M."/>
            <person name="Togashi T."/>
            <person name="Oyama M."/>
            <person name="Hata H."/>
            <person name="Watanabe M."/>
            <person name="Komatsu T."/>
            <person name="Mizushima-Sugano J."/>
            <person name="Satoh T."/>
            <person name="Shirai Y."/>
            <person name="Takahashi Y."/>
            <person name="Nakagawa K."/>
            <person name="Okumura K."/>
            <person name="Nagase T."/>
            <person name="Nomura N."/>
            <person name="Kikuchi H."/>
            <person name="Masuho Y."/>
            <person name="Yamashita R."/>
            <person name="Nakai K."/>
            <person name="Yada T."/>
            <person name="Nakamura Y."/>
            <person name="Ohara O."/>
            <person name="Isogai T."/>
            <person name="Sugano S."/>
        </authorList>
    </citation>
    <scope>NUCLEOTIDE SEQUENCE [LARGE SCALE MRNA] (ISOFORM 1)</scope>
    <source>
        <tissue>Testis</tissue>
    </source>
</reference>
<reference key="2">
    <citation type="submission" date="2008-12" db="EMBL/GenBank/DDBJ databases">
        <authorList>
            <consortium name="NHLBI resequencing and genotyping service (RS&amp;G)"/>
        </authorList>
    </citation>
    <scope>NUCLEOTIDE SEQUENCE [GENOMIC DNA]</scope>
</reference>
<reference key="3">
    <citation type="submission" date="2005-07" db="EMBL/GenBank/DDBJ databases">
        <authorList>
            <person name="Mural R.J."/>
            <person name="Istrail S."/>
            <person name="Sutton G.G."/>
            <person name="Florea L."/>
            <person name="Halpern A.L."/>
            <person name="Mobarry C.M."/>
            <person name="Lippert R."/>
            <person name="Walenz B."/>
            <person name="Shatkay H."/>
            <person name="Dew I."/>
            <person name="Miller J.R."/>
            <person name="Flanigan M.J."/>
            <person name="Edwards N.J."/>
            <person name="Bolanos R."/>
            <person name="Fasulo D."/>
            <person name="Halldorsson B.V."/>
            <person name="Hannenhalli S."/>
            <person name="Turner R."/>
            <person name="Yooseph S."/>
            <person name="Lu F."/>
            <person name="Nusskern D.R."/>
            <person name="Shue B.C."/>
            <person name="Zheng X.H."/>
            <person name="Zhong F."/>
            <person name="Delcher A.L."/>
            <person name="Huson D.H."/>
            <person name="Kravitz S.A."/>
            <person name="Mouchard L."/>
            <person name="Reinert K."/>
            <person name="Remington K.A."/>
            <person name="Clark A.G."/>
            <person name="Waterman M.S."/>
            <person name="Eichler E.E."/>
            <person name="Adams M.D."/>
            <person name="Hunkapiller M.W."/>
            <person name="Myers E.W."/>
            <person name="Venter J.C."/>
        </authorList>
    </citation>
    <scope>NUCLEOTIDE SEQUENCE [LARGE SCALE GENOMIC DNA]</scope>
</reference>
<reference key="4">
    <citation type="journal article" date="2004" name="Genome Res.">
        <title>The status, quality, and expansion of the NIH full-length cDNA project: the Mammalian Gene Collection (MGC).</title>
        <authorList>
            <consortium name="The MGC Project Team"/>
        </authorList>
    </citation>
    <scope>NUCLEOTIDE SEQUENCE [LARGE SCALE MRNA] (ISOFORMS 1 AND 2)</scope>
</reference>